<accession>Q8P2U5</accession>
<organism>
    <name type="scientific">Streptococcus pyogenes serotype M18 (strain MGAS8232)</name>
    <dbReference type="NCBI Taxonomy" id="186103"/>
    <lineage>
        <taxon>Bacteria</taxon>
        <taxon>Bacillati</taxon>
        <taxon>Bacillota</taxon>
        <taxon>Bacilli</taxon>
        <taxon>Lactobacillales</taxon>
        <taxon>Streptococcaceae</taxon>
        <taxon>Streptococcus</taxon>
    </lineage>
</organism>
<sequence length="471" mass="52300">MSVLKEYRTVSEVVGPLMIVDQVAGVHYNELVDITLHNGARRKGQVLEVQGDKAMVQLFEGSTGINLAKTKVRFTGHPLELAVSEDMVGRIFDGMGQPIDGGPELIPEKYLDIDGQAINPVARDYPDEFIQTGISAIDHLNTLVRGQKLPVFSGSGLPHNELAAQIARQATVLNSDDNFAVVFAAMGITFEEAEFFMNDLRETGAIDRSVLFINLANDPAIERIATPRIALTTAEYLAYEKGMHVLVIMTDMTNYCEALREVSAARREVPGRRGYPGYLYTNLSTLYERAGRLIGKKGSVTQIPILTMPEDDITHPIPDLTGYITEGQIILSQELYKNGFRPPINVLPSLSRLKDKGSGEGKTRQDHAATMNQLFAAYAQGKQAKELAVVLGESALSETDKLYVAFTNRFEEEYINQGFYTNRSIEESLDLGWELLSILPRTELKRIKDDMLDRYLPKADTTMTKVFVAND</sequence>
<proteinExistence type="inferred from homology"/>
<reference key="1">
    <citation type="journal article" date="2002" name="Proc. Natl. Acad. Sci. U.S.A.">
        <title>Genome sequence and comparative microarray analysis of serotype M18 group A Streptococcus strains associated with acute rheumatic fever outbreaks.</title>
        <authorList>
            <person name="Smoot J.C."/>
            <person name="Barbian K.D."/>
            <person name="Van Gompel J.J."/>
            <person name="Smoot L.M."/>
            <person name="Chaussee M.S."/>
            <person name="Sylva G.L."/>
            <person name="Sturdevant D.E."/>
            <person name="Ricklefs S.M."/>
            <person name="Porcella S.F."/>
            <person name="Parkins L.D."/>
            <person name="Beres S.B."/>
            <person name="Campbell D.S."/>
            <person name="Smith T.M."/>
            <person name="Zhang Q."/>
            <person name="Kapur V."/>
            <person name="Daly J.A."/>
            <person name="Veasy L.G."/>
            <person name="Musser J.M."/>
        </authorList>
    </citation>
    <scope>NUCLEOTIDE SEQUENCE [LARGE SCALE GENOMIC DNA]</scope>
    <source>
        <strain>MGAS8232</strain>
    </source>
</reference>
<gene>
    <name evidence="1" type="primary">atpB</name>
    <name type="ordered locus">spyM18_0151</name>
</gene>
<dbReference type="EMBL" id="AE009949">
    <property type="protein sequence ID" value="AAL96959.1"/>
    <property type="molecule type" value="Genomic_DNA"/>
</dbReference>
<dbReference type="RefSeq" id="WP_011017276.1">
    <property type="nucleotide sequence ID" value="NC_003485.1"/>
</dbReference>
<dbReference type="SMR" id="Q8P2U5"/>
<dbReference type="KEGG" id="spm:spyM18_0151"/>
<dbReference type="HOGENOM" id="CLU_022916_0_0_9"/>
<dbReference type="GO" id="GO:0005524">
    <property type="term" value="F:ATP binding"/>
    <property type="evidence" value="ECO:0007669"/>
    <property type="project" value="UniProtKB-UniRule"/>
</dbReference>
<dbReference type="GO" id="GO:0046933">
    <property type="term" value="F:proton-transporting ATP synthase activity, rotational mechanism"/>
    <property type="evidence" value="ECO:0007669"/>
    <property type="project" value="UniProtKB-UniRule"/>
</dbReference>
<dbReference type="GO" id="GO:0042777">
    <property type="term" value="P:proton motive force-driven plasma membrane ATP synthesis"/>
    <property type="evidence" value="ECO:0007669"/>
    <property type="project" value="UniProtKB-UniRule"/>
</dbReference>
<dbReference type="CDD" id="cd18112">
    <property type="entry name" value="ATP-synt_V_A-type_beta_C"/>
    <property type="match status" value="1"/>
</dbReference>
<dbReference type="CDD" id="cd18118">
    <property type="entry name" value="ATP-synt_V_A-type_beta_N"/>
    <property type="match status" value="1"/>
</dbReference>
<dbReference type="CDD" id="cd01135">
    <property type="entry name" value="V_A-ATPase_B"/>
    <property type="match status" value="1"/>
</dbReference>
<dbReference type="Gene3D" id="3.40.50.12240">
    <property type="match status" value="1"/>
</dbReference>
<dbReference type="HAMAP" id="MF_00310">
    <property type="entry name" value="ATP_synth_B_arch"/>
    <property type="match status" value="1"/>
</dbReference>
<dbReference type="InterPro" id="IPR055190">
    <property type="entry name" value="ATP-synt_VA_C"/>
</dbReference>
<dbReference type="InterPro" id="IPR020003">
    <property type="entry name" value="ATPase_a/bsu_AS"/>
</dbReference>
<dbReference type="InterPro" id="IPR004100">
    <property type="entry name" value="ATPase_F1/V1/A1_a/bsu_N"/>
</dbReference>
<dbReference type="InterPro" id="IPR000194">
    <property type="entry name" value="ATPase_F1/V1/A1_a/bsu_nucl-bd"/>
</dbReference>
<dbReference type="InterPro" id="IPR027417">
    <property type="entry name" value="P-loop_NTPase"/>
</dbReference>
<dbReference type="InterPro" id="IPR022879">
    <property type="entry name" value="V-ATPase_su_B/beta"/>
</dbReference>
<dbReference type="NCBIfam" id="NF003235">
    <property type="entry name" value="PRK04196.1"/>
    <property type="match status" value="1"/>
</dbReference>
<dbReference type="PANTHER" id="PTHR43389">
    <property type="entry name" value="V-TYPE PROTON ATPASE SUBUNIT B"/>
    <property type="match status" value="1"/>
</dbReference>
<dbReference type="PANTHER" id="PTHR43389:SF4">
    <property type="entry name" value="V-TYPE PROTON ATPASE SUBUNIT B"/>
    <property type="match status" value="1"/>
</dbReference>
<dbReference type="Pfam" id="PF00006">
    <property type="entry name" value="ATP-synt_ab"/>
    <property type="match status" value="1"/>
</dbReference>
<dbReference type="Pfam" id="PF02874">
    <property type="entry name" value="ATP-synt_ab_N"/>
    <property type="match status" value="1"/>
</dbReference>
<dbReference type="Pfam" id="PF22919">
    <property type="entry name" value="ATP-synt_VA_C"/>
    <property type="match status" value="1"/>
</dbReference>
<dbReference type="PIRSF" id="PIRSF039114">
    <property type="entry name" value="V-ATPsynth_beta/V-ATPase_B"/>
    <property type="match status" value="1"/>
</dbReference>
<dbReference type="SUPFAM" id="SSF47917">
    <property type="entry name" value="C-terminal domain of alpha and beta subunits of F1 ATP synthase"/>
    <property type="match status" value="1"/>
</dbReference>
<dbReference type="SUPFAM" id="SSF52540">
    <property type="entry name" value="P-loop containing nucleoside triphosphate hydrolases"/>
    <property type="match status" value="1"/>
</dbReference>
<dbReference type="PROSITE" id="PS00152">
    <property type="entry name" value="ATPASE_ALPHA_BETA"/>
    <property type="match status" value="1"/>
</dbReference>
<protein>
    <recommendedName>
        <fullName evidence="1">V-type ATP synthase beta chain</fullName>
    </recommendedName>
    <alternativeName>
        <fullName evidence="1">V-ATPase subunit B</fullName>
    </alternativeName>
</protein>
<name>VATB_STRP8</name>
<feature type="chain" id="PRO_0000144681" description="V-type ATP synthase beta chain">
    <location>
        <begin position="1"/>
        <end position="471"/>
    </location>
</feature>
<keyword id="KW-0066">ATP synthesis</keyword>
<keyword id="KW-0375">Hydrogen ion transport</keyword>
<keyword id="KW-0406">Ion transport</keyword>
<keyword id="KW-0813">Transport</keyword>
<evidence type="ECO:0000255" key="1">
    <source>
        <dbReference type="HAMAP-Rule" id="MF_00310"/>
    </source>
</evidence>
<comment type="function">
    <text>Produces ATP from ADP in the presence of a proton gradient across the membrane. The V-type beta chain is a regulatory subunit.</text>
</comment>
<comment type="similarity">
    <text evidence="1">Belongs to the ATPase alpha/beta chains family.</text>
</comment>